<keyword id="KW-1185">Reference proteome</keyword>
<keyword id="KW-0687">Ribonucleoprotein</keyword>
<keyword id="KW-0689">Ribosomal protein</keyword>
<reference key="1">
    <citation type="journal article" date="2008" name="Proc. Natl. Acad. Sci. U.S.A.">
        <title>Nitrogen fixation island and rhizosphere competence traits in the genome of root-associated Pseudomonas stutzeri A1501.</title>
        <authorList>
            <person name="Yan Y."/>
            <person name="Yang J."/>
            <person name="Dou Y."/>
            <person name="Chen M."/>
            <person name="Ping S."/>
            <person name="Peng J."/>
            <person name="Lu W."/>
            <person name="Zhang W."/>
            <person name="Yao Z."/>
            <person name="Li H."/>
            <person name="Liu W."/>
            <person name="He S."/>
            <person name="Geng L."/>
            <person name="Zhang X."/>
            <person name="Yang F."/>
            <person name="Yu H."/>
            <person name="Zhan Y."/>
            <person name="Li D."/>
            <person name="Lin Z."/>
            <person name="Wang Y."/>
            <person name="Elmerich C."/>
            <person name="Lin M."/>
            <person name="Jin Q."/>
        </authorList>
    </citation>
    <scope>NUCLEOTIDE SEQUENCE [LARGE SCALE GENOMIC DNA]</scope>
    <source>
        <strain>A1501</strain>
    </source>
</reference>
<name>RS16_STUS1</name>
<dbReference type="EMBL" id="CP000304">
    <property type="protein sequence ID" value="ABP78886.1"/>
    <property type="molecule type" value="Genomic_DNA"/>
</dbReference>
<dbReference type="RefSeq" id="WP_011912373.1">
    <property type="nucleotide sequence ID" value="NC_009434.1"/>
</dbReference>
<dbReference type="SMR" id="A4VIT5"/>
<dbReference type="GeneID" id="75213784"/>
<dbReference type="KEGG" id="psa:PST_1191"/>
<dbReference type="eggNOG" id="COG0228">
    <property type="taxonomic scope" value="Bacteria"/>
</dbReference>
<dbReference type="HOGENOM" id="CLU_100590_5_1_6"/>
<dbReference type="Proteomes" id="UP000000233">
    <property type="component" value="Chromosome"/>
</dbReference>
<dbReference type="GO" id="GO:0005737">
    <property type="term" value="C:cytoplasm"/>
    <property type="evidence" value="ECO:0007669"/>
    <property type="project" value="UniProtKB-ARBA"/>
</dbReference>
<dbReference type="GO" id="GO:0015935">
    <property type="term" value="C:small ribosomal subunit"/>
    <property type="evidence" value="ECO:0007669"/>
    <property type="project" value="TreeGrafter"/>
</dbReference>
<dbReference type="GO" id="GO:0003735">
    <property type="term" value="F:structural constituent of ribosome"/>
    <property type="evidence" value="ECO:0007669"/>
    <property type="project" value="InterPro"/>
</dbReference>
<dbReference type="GO" id="GO:0006412">
    <property type="term" value="P:translation"/>
    <property type="evidence" value="ECO:0007669"/>
    <property type="project" value="UniProtKB-UniRule"/>
</dbReference>
<dbReference type="Gene3D" id="3.30.1320.10">
    <property type="match status" value="1"/>
</dbReference>
<dbReference type="HAMAP" id="MF_00385">
    <property type="entry name" value="Ribosomal_bS16"/>
    <property type="match status" value="1"/>
</dbReference>
<dbReference type="InterPro" id="IPR000307">
    <property type="entry name" value="Ribosomal_bS16"/>
</dbReference>
<dbReference type="InterPro" id="IPR023803">
    <property type="entry name" value="Ribosomal_bS16_dom_sf"/>
</dbReference>
<dbReference type="NCBIfam" id="TIGR00002">
    <property type="entry name" value="S16"/>
    <property type="match status" value="1"/>
</dbReference>
<dbReference type="PANTHER" id="PTHR12919">
    <property type="entry name" value="30S RIBOSOMAL PROTEIN S16"/>
    <property type="match status" value="1"/>
</dbReference>
<dbReference type="PANTHER" id="PTHR12919:SF20">
    <property type="entry name" value="SMALL RIBOSOMAL SUBUNIT PROTEIN BS16M"/>
    <property type="match status" value="1"/>
</dbReference>
<dbReference type="Pfam" id="PF00886">
    <property type="entry name" value="Ribosomal_S16"/>
    <property type="match status" value="1"/>
</dbReference>
<dbReference type="SUPFAM" id="SSF54565">
    <property type="entry name" value="Ribosomal protein S16"/>
    <property type="match status" value="1"/>
</dbReference>
<protein>
    <recommendedName>
        <fullName evidence="1">Small ribosomal subunit protein bS16</fullName>
    </recommendedName>
    <alternativeName>
        <fullName evidence="2">30S ribosomal protein S16</fullName>
    </alternativeName>
</protein>
<sequence>MVTIRLARGGSKKRPFYHLTVTNSRNPRDGRFVERIGFFNPIATGAEVKLSVNQERAAYWLSQGAQPSERVAQLLKEAAKAAA</sequence>
<feature type="chain" id="PRO_1000049324" description="Small ribosomal subunit protein bS16">
    <location>
        <begin position="1"/>
        <end position="83"/>
    </location>
</feature>
<proteinExistence type="inferred from homology"/>
<evidence type="ECO:0000255" key="1">
    <source>
        <dbReference type="HAMAP-Rule" id="MF_00385"/>
    </source>
</evidence>
<evidence type="ECO:0000305" key="2"/>
<gene>
    <name evidence="1" type="primary">rpsP</name>
    <name type="ordered locus">PST_1191</name>
</gene>
<accession>A4VIT5</accession>
<comment type="similarity">
    <text evidence="1">Belongs to the bacterial ribosomal protein bS16 family.</text>
</comment>
<organism>
    <name type="scientific">Stutzerimonas stutzeri (strain A1501)</name>
    <name type="common">Pseudomonas stutzeri</name>
    <dbReference type="NCBI Taxonomy" id="379731"/>
    <lineage>
        <taxon>Bacteria</taxon>
        <taxon>Pseudomonadati</taxon>
        <taxon>Pseudomonadota</taxon>
        <taxon>Gammaproteobacteria</taxon>
        <taxon>Pseudomonadales</taxon>
        <taxon>Pseudomonadaceae</taxon>
        <taxon>Stutzerimonas</taxon>
    </lineage>
</organism>